<sequence length="465" mass="48691">MGRTLAEKVWDAHVVRRADGEPDLLYIDLHLVHEVTSPQAFEALRLAGRPVRRPELTLATEDHNVPTTDTLAPIADPISAAQVEALRKNCAEFGVRLYPMNDPGQGIVHVVGPQLGLSQPGMTIVCGDSHTSTHGAFGALAFGIGTSQVEHVLATQTLPQRRPKTMAITVAGDLPVGVSAKDLILAIIARIGTGGGAGHVIEYRGAAIRALSMEGRMTVCNMSIEAGARAGMIAPDDVTFEYLAGRPRVATGAAWEEAVAYWRTLASDSDAVFDREVVIDAASLTPYVTWGTNPGQAAPLGSLVPAPADYPDAAARASVERALTYMGLTPGTPLSDVTVDTVFIGSCTNGRLSDLRAAADVLRGRRVSEGVRVLIVPGSMAVKAQAEAEGLDEVFRAAGAQWRSAGCSMCLGMNPDTLRPGERSASTSNRNFEGRQGPGGRTHLVSPAVAAATAVTGRLTAPADL</sequence>
<dbReference type="EC" id="4.2.1.33" evidence="1"/>
<dbReference type="EMBL" id="CP000249">
    <property type="protein sequence ID" value="ABD12973.1"/>
    <property type="molecule type" value="Genomic_DNA"/>
</dbReference>
<dbReference type="RefSeq" id="WP_011437997.1">
    <property type="nucleotide sequence ID" value="NZ_LRTJ01000033.1"/>
</dbReference>
<dbReference type="SMR" id="Q2J6W9"/>
<dbReference type="STRING" id="106370.Francci3_3621"/>
<dbReference type="KEGG" id="fra:Francci3_3621"/>
<dbReference type="eggNOG" id="COG0065">
    <property type="taxonomic scope" value="Bacteria"/>
</dbReference>
<dbReference type="HOGENOM" id="CLU_006714_3_4_11"/>
<dbReference type="OrthoDB" id="9802769at2"/>
<dbReference type="PhylomeDB" id="Q2J6W9"/>
<dbReference type="UniPathway" id="UPA00048">
    <property type="reaction ID" value="UER00071"/>
</dbReference>
<dbReference type="Proteomes" id="UP000001937">
    <property type="component" value="Chromosome"/>
</dbReference>
<dbReference type="GO" id="GO:0003861">
    <property type="term" value="F:3-isopropylmalate dehydratase activity"/>
    <property type="evidence" value="ECO:0007669"/>
    <property type="project" value="UniProtKB-UniRule"/>
</dbReference>
<dbReference type="GO" id="GO:0051539">
    <property type="term" value="F:4 iron, 4 sulfur cluster binding"/>
    <property type="evidence" value="ECO:0007669"/>
    <property type="project" value="UniProtKB-KW"/>
</dbReference>
<dbReference type="GO" id="GO:0046872">
    <property type="term" value="F:metal ion binding"/>
    <property type="evidence" value="ECO:0007669"/>
    <property type="project" value="UniProtKB-KW"/>
</dbReference>
<dbReference type="GO" id="GO:0009098">
    <property type="term" value="P:L-leucine biosynthetic process"/>
    <property type="evidence" value="ECO:0007669"/>
    <property type="project" value="UniProtKB-UniRule"/>
</dbReference>
<dbReference type="CDD" id="cd01583">
    <property type="entry name" value="IPMI"/>
    <property type="match status" value="1"/>
</dbReference>
<dbReference type="FunFam" id="3.30.499.10:FF:000007">
    <property type="entry name" value="3-isopropylmalate dehydratase large subunit"/>
    <property type="match status" value="1"/>
</dbReference>
<dbReference type="Gene3D" id="3.30.499.10">
    <property type="entry name" value="Aconitase, domain 3"/>
    <property type="match status" value="2"/>
</dbReference>
<dbReference type="HAMAP" id="MF_01026">
    <property type="entry name" value="LeuC_type1"/>
    <property type="match status" value="1"/>
</dbReference>
<dbReference type="InterPro" id="IPR004430">
    <property type="entry name" value="3-IsopropMal_deHydase_lsu"/>
</dbReference>
<dbReference type="InterPro" id="IPR015931">
    <property type="entry name" value="Acnase/IPM_dHydase_lsu_aba_1/3"/>
</dbReference>
<dbReference type="InterPro" id="IPR001030">
    <property type="entry name" value="Acoase/IPM_deHydtase_lsu_aba"/>
</dbReference>
<dbReference type="InterPro" id="IPR018136">
    <property type="entry name" value="Aconitase_4Fe-4S_BS"/>
</dbReference>
<dbReference type="InterPro" id="IPR036008">
    <property type="entry name" value="Aconitase_4Fe-4S_dom"/>
</dbReference>
<dbReference type="InterPro" id="IPR050067">
    <property type="entry name" value="IPM_dehydratase_rel_enz"/>
</dbReference>
<dbReference type="InterPro" id="IPR033941">
    <property type="entry name" value="IPMI_cat"/>
</dbReference>
<dbReference type="NCBIfam" id="TIGR00170">
    <property type="entry name" value="leuC"/>
    <property type="match status" value="1"/>
</dbReference>
<dbReference type="NCBIfam" id="NF004016">
    <property type="entry name" value="PRK05478.1"/>
    <property type="match status" value="1"/>
</dbReference>
<dbReference type="NCBIfam" id="NF009116">
    <property type="entry name" value="PRK12466.1"/>
    <property type="match status" value="1"/>
</dbReference>
<dbReference type="PANTHER" id="PTHR43822:SF9">
    <property type="entry name" value="3-ISOPROPYLMALATE DEHYDRATASE"/>
    <property type="match status" value="1"/>
</dbReference>
<dbReference type="PANTHER" id="PTHR43822">
    <property type="entry name" value="HOMOACONITASE, MITOCHONDRIAL-RELATED"/>
    <property type="match status" value="1"/>
</dbReference>
<dbReference type="Pfam" id="PF00330">
    <property type="entry name" value="Aconitase"/>
    <property type="match status" value="1"/>
</dbReference>
<dbReference type="PRINTS" id="PR00415">
    <property type="entry name" value="ACONITASE"/>
</dbReference>
<dbReference type="SUPFAM" id="SSF53732">
    <property type="entry name" value="Aconitase iron-sulfur domain"/>
    <property type="match status" value="1"/>
</dbReference>
<dbReference type="PROSITE" id="PS00450">
    <property type="entry name" value="ACONITASE_1"/>
    <property type="match status" value="1"/>
</dbReference>
<dbReference type="PROSITE" id="PS01244">
    <property type="entry name" value="ACONITASE_2"/>
    <property type="match status" value="1"/>
</dbReference>
<keyword id="KW-0004">4Fe-4S</keyword>
<keyword id="KW-0028">Amino-acid biosynthesis</keyword>
<keyword id="KW-0100">Branched-chain amino acid biosynthesis</keyword>
<keyword id="KW-0408">Iron</keyword>
<keyword id="KW-0411">Iron-sulfur</keyword>
<keyword id="KW-0432">Leucine biosynthesis</keyword>
<keyword id="KW-0456">Lyase</keyword>
<keyword id="KW-0479">Metal-binding</keyword>
<keyword id="KW-1185">Reference proteome</keyword>
<organism>
    <name type="scientific">Frankia casuarinae (strain DSM 45818 / CECT 9043 / HFP020203 / CcI3)</name>
    <dbReference type="NCBI Taxonomy" id="106370"/>
    <lineage>
        <taxon>Bacteria</taxon>
        <taxon>Bacillati</taxon>
        <taxon>Actinomycetota</taxon>
        <taxon>Actinomycetes</taxon>
        <taxon>Frankiales</taxon>
        <taxon>Frankiaceae</taxon>
        <taxon>Frankia</taxon>
    </lineage>
</organism>
<reference key="1">
    <citation type="journal article" date="2007" name="Genome Res.">
        <title>Genome characteristics of facultatively symbiotic Frankia sp. strains reflect host range and host plant biogeography.</title>
        <authorList>
            <person name="Normand P."/>
            <person name="Lapierre P."/>
            <person name="Tisa L.S."/>
            <person name="Gogarten J.P."/>
            <person name="Alloisio N."/>
            <person name="Bagnarol E."/>
            <person name="Bassi C.A."/>
            <person name="Berry A.M."/>
            <person name="Bickhart D.M."/>
            <person name="Choisne N."/>
            <person name="Couloux A."/>
            <person name="Cournoyer B."/>
            <person name="Cruveiller S."/>
            <person name="Daubin V."/>
            <person name="Demange N."/>
            <person name="Francino M.P."/>
            <person name="Goltsman E."/>
            <person name="Huang Y."/>
            <person name="Kopp O.R."/>
            <person name="Labarre L."/>
            <person name="Lapidus A."/>
            <person name="Lavire C."/>
            <person name="Marechal J."/>
            <person name="Martinez M."/>
            <person name="Mastronunzio J.E."/>
            <person name="Mullin B.C."/>
            <person name="Niemann J."/>
            <person name="Pujic P."/>
            <person name="Rawnsley T."/>
            <person name="Rouy Z."/>
            <person name="Schenowitz C."/>
            <person name="Sellstedt A."/>
            <person name="Tavares F."/>
            <person name="Tomkins J.P."/>
            <person name="Vallenet D."/>
            <person name="Valverde C."/>
            <person name="Wall L.G."/>
            <person name="Wang Y."/>
            <person name="Medigue C."/>
            <person name="Benson D.R."/>
        </authorList>
    </citation>
    <scope>NUCLEOTIDE SEQUENCE [LARGE SCALE GENOMIC DNA]</scope>
    <source>
        <strain>DSM 45818 / CECT 9043 / HFP020203 / CcI3</strain>
    </source>
</reference>
<gene>
    <name evidence="1" type="primary">leuC</name>
    <name type="ordered locus">Francci3_3621</name>
</gene>
<feature type="chain" id="PRO_1000063556" description="3-isopropylmalate dehydratase large subunit">
    <location>
        <begin position="1"/>
        <end position="465"/>
    </location>
</feature>
<feature type="region of interest" description="Disordered" evidence="2">
    <location>
        <begin position="416"/>
        <end position="443"/>
    </location>
</feature>
<feature type="binding site" evidence="1">
    <location>
        <position position="347"/>
    </location>
    <ligand>
        <name>[4Fe-4S] cluster</name>
        <dbReference type="ChEBI" id="CHEBI:49883"/>
    </ligand>
</feature>
<feature type="binding site" evidence="1">
    <location>
        <position position="407"/>
    </location>
    <ligand>
        <name>[4Fe-4S] cluster</name>
        <dbReference type="ChEBI" id="CHEBI:49883"/>
    </ligand>
</feature>
<feature type="binding site" evidence="1">
    <location>
        <position position="410"/>
    </location>
    <ligand>
        <name>[4Fe-4S] cluster</name>
        <dbReference type="ChEBI" id="CHEBI:49883"/>
    </ligand>
</feature>
<comment type="function">
    <text evidence="1">Catalyzes the isomerization between 2-isopropylmalate and 3-isopropylmalate, via the formation of 2-isopropylmaleate.</text>
</comment>
<comment type="catalytic activity">
    <reaction evidence="1">
        <text>(2R,3S)-3-isopropylmalate = (2S)-2-isopropylmalate</text>
        <dbReference type="Rhea" id="RHEA:32287"/>
        <dbReference type="ChEBI" id="CHEBI:1178"/>
        <dbReference type="ChEBI" id="CHEBI:35121"/>
        <dbReference type="EC" id="4.2.1.33"/>
    </reaction>
</comment>
<comment type="cofactor">
    <cofactor evidence="1">
        <name>[4Fe-4S] cluster</name>
        <dbReference type="ChEBI" id="CHEBI:49883"/>
    </cofactor>
    <text evidence="1">Binds 1 [4Fe-4S] cluster per subunit.</text>
</comment>
<comment type="pathway">
    <text evidence="1">Amino-acid biosynthesis; L-leucine biosynthesis; L-leucine from 3-methyl-2-oxobutanoate: step 2/4.</text>
</comment>
<comment type="subunit">
    <text evidence="1">Heterodimer of LeuC and LeuD.</text>
</comment>
<comment type="similarity">
    <text evidence="1">Belongs to the aconitase/IPM isomerase family. LeuC type 1 subfamily.</text>
</comment>
<accession>Q2J6W9</accession>
<evidence type="ECO:0000255" key="1">
    <source>
        <dbReference type="HAMAP-Rule" id="MF_01026"/>
    </source>
</evidence>
<evidence type="ECO:0000256" key="2">
    <source>
        <dbReference type="SAM" id="MobiDB-lite"/>
    </source>
</evidence>
<protein>
    <recommendedName>
        <fullName evidence="1">3-isopropylmalate dehydratase large subunit</fullName>
        <ecNumber evidence="1">4.2.1.33</ecNumber>
    </recommendedName>
    <alternativeName>
        <fullName evidence="1">Alpha-IPM isomerase</fullName>
        <shortName evidence="1">IPMI</shortName>
    </alternativeName>
    <alternativeName>
        <fullName evidence="1">Isopropylmalate isomerase</fullName>
    </alternativeName>
</protein>
<proteinExistence type="inferred from homology"/>
<name>LEUC_FRACC</name>